<reference key="1">
    <citation type="journal article" date="2003" name="Nature">
        <title>Genome sequence of Bacillus cereus and comparative analysis with Bacillus anthracis.</title>
        <authorList>
            <person name="Ivanova N."/>
            <person name="Sorokin A."/>
            <person name="Anderson I."/>
            <person name="Galleron N."/>
            <person name="Candelon B."/>
            <person name="Kapatral V."/>
            <person name="Bhattacharyya A."/>
            <person name="Reznik G."/>
            <person name="Mikhailova N."/>
            <person name="Lapidus A."/>
            <person name="Chu L."/>
            <person name="Mazur M."/>
            <person name="Goltsman E."/>
            <person name="Larsen N."/>
            <person name="D'Souza M."/>
            <person name="Walunas T."/>
            <person name="Grechkin Y."/>
            <person name="Pusch G."/>
            <person name="Haselkorn R."/>
            <person name="Fonstein M."/>
            <person name="Ehrlich S.D."/>
            <person name="Overbeek R."/>
            <person name="Kyrpides N.C."/>
        </authorList>
    </citation>
    <scope>NUCLEOTIDE SEQUENCE [LARGE SCALE GENOMIC DNA]</scope>
    <source>
        <strain>ATCC 14579 / DSM 31 / CCUG 7414 / JCM 2152 / NBRC 15305 / NCIMB 9373 / NCTC 2599 / NRRL B-3711</strain>
    </source>
</reference>
<accession>Q81HW8</accession>
<evidence type="ECO:0000255" key="1">
    <source>
        <dbReference type="HAMAP-Rule" id="MF_01716"/>
    </source>
</evidence>
<gene>
    <name evidence="1" type="primary">rbsA</name>
    <name type="ordered locus">BC_0662</name>
</gene>
<keyword id="KW-0067">ATP-binding</keyword>
<keyword id="KW-1003">Cell membrane</keyword>
<keyword id="KW-0472">Membrane</keyword>
<keyword id="KW-0547">Nucleotide-binding</keyword>
<keyword id="KW-1185">Reference proteome</keyword>
<keyword id="KW-0677">Repeat</keyword>
<keyword id="KW-0762">Sugar transport</keyword>
<keyword id="KW-1278">Translocase</keyword>
<keyword id="KW-0813">Transport</keyword>
<name>RBSA_BACCR</name>
<comment type="function">
    <text evidence="1">Part of the ABC transporter complex RbsABC involved in ribose import. Responsible for energy coupling to the transport system.</text>
</comment>
<comment type="catalytic activity">
    <reaction evidence="1">
        <text>D-ribose(out) + ATP + H2O = D-ribose(in) + ADP + phosphate + H(+)</text>
        <dbReference type="Rhea" id="RHEA:29903"/>
        <dbReference type="ChEBI" id="CHEBI:15377"/>
        <dbReference type="ChEBI" id="CHEBI:15378"/>
        <dbReference type="ChEBI" id="CHEBI:30616"/>
        <dbReference type="ChEBI" id="CHEBI:43474"/>
        <dbReference type="ChEBI" id="CHEBI:47013"/>
        <dbReference type="ChEBI" id="CHEBI:456216"/>
        <dbReference type="EC" id="7.5.2.7"/>
    </reaction>
</comment>
<comment type="subunit">
    <text evidence="1">The complex is composed of an ATP-binding protein (RbsA), two transmembrane proteins (RbsC) and a solute-binding protein (RbsB).</text>
</comment>
<comment type="subcellular location">
    <subcellularLocation>
        <location evidence="1">Cell membrane</location>
        <topology evidence="1">Peripheral membrane protein</topology>
    </subcellularLocation>
</comment>
<comment type="similarity">
    <text evidence="1">Belongs to the ABC transporter superfamily. Ribose importer (TC 3.A.1.2.1) family.</text>
</comment>
<dbReference type="EC" id="7.5.2.7" evidence="1"/>
<dbReference type="EMBL" id="AE016877">
    <property type="protein sequence ID" value="AAP07677.1"/>
    <property type="molecule type" value="Genomic_DNA"/>
</dbReference>
<dbReference type="RefSeq" id="NP_830476.1">
    <property type="nucleotide sequence ID" value="NC_004722.1"/>
</dbReference>
<dbReference type="SMR" id="Q81HW8"/>
<dbReference type="STRING" id="226900.BC_0662"/>
<dbReference type="KEGG" id="bce:BC0662"/>
<dbReference type="PATRIC" id="fig|226900.8.peg.622"/>
<dbReference type="HOGENOM" id="CLU_000604_92_3_9"/>
<dbReference type="Proteomes" id="UP000001417">
    <property type="component" value="Chromosome"/>
</dbReference>
<dbReference type="GO" id="GO:0005886">
    <property type="term" value="C:plasma membrane"/>
    <property type="evidence" value="ECO:0007669"/>
    <property type="project" value="UniProtKB-SubCell"/>
</dbReference>
<dbReference type="GO" id="GO:0015611">
    <property type="term" value="F:ABC-type D-ribose transporter activity"/>
    <property type="evidence" value="ECO:0007669"/>
    <property type="project" value="UniProtKB-EC"/>
</dbReference>
<dbReference type="GO" id="GO:0005524">
    <property type="term" value="F:ATP binding"/>
    <property type="evidence" value="ECO:0007669"/>
    <property type="project" value="UniProtKB-KW"/>
</dbReference>
<dbReference type="GO" id="GO:0016887">
    <property type="term" value="F:ATP hydrolysis activity"/>
    <property type="evidence" value="ECO:0007669"/>
    <property type="project" value="InterPro"/>
</dbReference>
<dbReference type="CDD" id="cd03216">
    <property type="entry name" value="ABC_Carb_Monos_I"/>
    <property type="match status" value="1"/>
</dbReference>
<dbReference type="CDD" id="cd03215">
    <property type="entry name" value="ABC_Carb_Monos_II"/>
    <property type="match status" value="1"/>
</dbReference>
<dbReference type="FunFam" id="3.40.50.300:FF:000126">
    <property type="entry name" value="Galactose/methyl galactoside import ATP-binding protein MglA"/>
    <property type="match status" value="1"/>
</dbReference>
<dbReference type="FunFam" id="3.40.50.300:FF:000127">
    <property type="entry name" value="Ribose import ATP-binding protein RbsA"/>
    <property type="match status" value="1"/>
</dbReference>
<dbReference type="Gene3D" id="3.40.50.300">
    <property type="entry name" value="P-loop containing nucleotide triphosphate hydrolases"/>
    <property type="match status" value="2"/>
</dbReference>
<dbReference type="InterPro" id="IPR003593">
    <property type="entry name" value="AAA+_ATPase"/>
</dbReference>
<dbReference type="InterPro" id="IPR050107">
    <property type="entry name" value="ABC_carbohydrate_import_ATPase"/>
</dbReference>
<dbReference type="InterPro" id="IPR003439">
    <property type="entry name" value="ABC_transporter-like_ATP-bd"/>
</dbReference>
<dbReference type="InterPro" id="IPR017871">
    <property type="entry name" value="ABC_transporter-like_CS"/>
</dbReference>
<dbReference type="InterPro" id="IPR027417">
    <property type="entry name" value="P-loop_NTPase"/>
</dbReference>
<dbReference type="PANTHER" id="PTHR43790">
    <property type="entry name" value="CARBOHYDRATE TRANSPORT ATP-BINDING PROTEIN MG119-RELATED"/>
    <property type="match status" value="1"/>
</dbReference>
<dbReference type="PANTHER" id="PTHR43790:SF3">
    <property type="entry name" value="D-ALLOSE IMPORT ATP-BINDING PROTEIN ALSA-RELATED"/>
    <property type="match status" value="1"/>
</dbReference>
<dbReference type="Pfam" id="PF00005">
    <property type="entry name" value="ABC_tran"/>
    <property type="match status" value="2"/>
</dbReference>
<dbReference type="SMART" id="SM00382">
    <property type="entry name" value="AAA"/>
    <property type="match status" value="2"/>
</dbReference>
<dbReference type="SUPFAM" id="SSF52540">
    <property type="entry name" value="P-loop containing nucleoside triphosphate hydrolases"/>
    <property type="match status" value="2"/>
</dbReference>
<dbReference type="PROSITE" id="PS00211">
    <property type="entry name" value="ABC_TRANSPORTER_1"/>
    <property type="match status" value="1"/>
</dbReference>
<dbReference type="PROSITE" id="PS50893">
    <property type="entry name" value="ABC_TRANSPORTER_2"/>
    <property type="match status" value="2"/>
</dbReference>
<dbReference type="PROSITE" id="PS51254">
    <property type="entry name" value="RBSA"/>
    <property type="match status" value="1"/>
</dbReference>
<protein>
    <recommendedName>
        <fullName evidence="1">Ribose import ATP-binding protein RbsA</fullName>
        <ecNumber evidence="1">7.5.2.7</ecNumber>
    </recommendedName>
</protein>
<feature type="chain" id="PRO_0000261038" description="Ribose import ATP-binding protein RbsA">
    <location>
        <begin position="1"/>
        <end position="496"/>
    </location>
</feature>
<feature type="domain" description="ABC transporter 1" evidence="1">
    <location>
        <begin position="5"/>
        <end position="242"/>
    </location>
</feature>
<feature type="domain" description="ABC transporter 2" evidence="1">
    <location>
        <begin position="252"/>
        <end position="496"/>
    </location>
</feature>
<feature type="binding site" evidence="1">
    <location>
        <begin position="37"/>
        <end position="44"/>
    </location>
    <ligand>
        <name>ATP</name>
        <dbReference type="ChEBI" id="CHEBI:30616"/>
    </ligand>
</feature>
<organism>
    <name type="scientific">Bacillus cereus (strain ATCC 14579 / DSM 31 / CCUG 7414 / JCM 2152 / NBRC 15305 / NCIMB 9373 / NCTC 2599 / NRRL B-3711)</name>
    <dbReference type="NCBI Taxonomy" id="226900"/>
    <lineage>
        <taxon>Bacteria</taxon>
        <taxon>Bacillati</taxon>
        <taxon>Bacillota</taxon>
        <taxon>Bacilli</taxon>
        <taxon>Bacillales</taxon>
        <taxon>Bacillaceae</taxon>
        <taxon>Bacillus</taxon>
        <taxon>Bacillus cereus group</taxon>
    </lineage>
</organism>
<sequence>MGMHIEMKNISKAFNGNPVLKNAQFMIETGEVHALMGENGAGKSTLMKILTGVYKKDGGTIKIDGQERTFKNAKEAEEYGIAFIHQELNILPNLTVAENMFLGKELMYGKTGILRTRQMNAIAQQQLAELGLHVRGAMLAEELSVGQQQIIEIAKALMTNASVIIMDEPTAALTDREIETLFTVINKLRKEGVSFVYISHRMEEIFSICDAITILRDGEYVGKRLIPETSFDEVVSMMVGRSIGERYPERNSQIGDVIFEMRNGTKKGKFENVSFQVRKGEILGVAGLMGAGRTDIMKAIFGYEPLDSGQIFINGQEVKIDSPIDAIRQRIAFITEDRKSEGLVLDFSIRENLALPNLENLSKGSVLSNELEQQFTEDMMKLLNVKASSGEQAVKSLSGGNQQKIVIAKWLGIHPQLLILDEPTRGVDVGAKKEIYSIMNKLTEQGDAVIMVSSELPEVLGMSDRVLVIHEGKVGGILGKDEASQESIMALATGGE</sequence>
<proteinExistence type="inferred from homology"/>